<sequence>MSATPSRTPHLDRVTGPADLKAMSIADLTALASEVRREIVEVVSQTGGHLGSSLGVVELTVALHAVFNSPGDKLIWDVGHQCYPHKILTGRRSRMLTLRQAGGISGFPKRSESPHDAFGAGHSSTSISAALGFAVGRELGQPVGDTIAIIGDGSITAGMAYEALNHAGHLKSRMFVILNDNDMSIAPPVGALQHYLNTIARQAPFAALKAAAEGIEMHLPGPVRDGARRARQMVTAMPGGATLFEELGFDYIGPVDGHDMAELVETLRVTRARASGPVLIHVCTTKGKGYAPAEGAEDKLHGVSKFDIETGKQKKSIPNAPNYTAVFGERLTEEAARDQAIVAVTAAMPTGTGLDIMQKRFPRRVFDVGIAEQHAVTFAAGMAAAGLKPFLALYSSFVQRGYDQLVHDVALQNLPVRLMIDRAGLVGQDGATHAGAFDVSMLANLPNFTVMAAADEAELCHMVVTAAAHDSGPIALRYPRGEGRGVEMPERGEVLEIGKGRVMTEGTEVAILSFGAHLAQALKAAEMLEAEGVSTTVADARFCRPLDTDLIDRLIEGHAALITLEQGAMGGFGAMVLHYLARTGQLEKGRAIRTMTLPDCYIDHGSPEEMYAWAGLTANDIRDTALAAARPSKSVRIVHSA</sequence>
<proteinExistence type="inferred from homology"/>
<comment type="function">
    <text evidence="1">Catalyzes the acyloin condensation reaction between C atoms 2 and 3 of pyruvate and glyceraldehyde 3-phosphate to yield 1-deoxy-D-xylulose-5-phosphate (DXP).</text>
</comment>
<comment type="catalytic activity">
    <reaction evidence="1">
        <text>D-glyceraldehyde 3-phosphate + pyruvate + H(+) = 1-deoxy-D-xylulose 5-phosphate + CO2</text>
        <dbReference type="Rhea" id="RHEA:12605"/>
        <dbReference type="ChEBI" id="CHEBI:15361"/>
        <dbReference type="ChEBI" id="CHEBI:15378"/>
        <dbReference type="ChEBI" id="CHEBI:16526"/>
        <dbReference type="ChEBI" id="CHEBI:57792"/>
        <dbReference type="ChEBI" id="CHEBI:59776"/>
        <dbReference type="EC" id="2.2.1.7"/>
    </reaction>
</comment>
<comment type="cofactor">
    <cofactor evidence="1">
        <name>Mg(2+)</name>
        <dbReference type="ChEBI" id="CHEBI:18420"/>
    </cofactor>
    <text evidence="1">Binds 1 Mg(2+) ion per subunit.</text>
</comment>
<comment type="cofactor">
    <cofactor evidence="1">
        <name>thiamine diphosphate</name>
        <dbReference type="ChEBI" id="CHEBI:58937"/>
    </cofactor>
    <text evidence="1">Binds 1 thiamine pyrophosphate per subunit.</text>
</comment>
<comment type="pathway">
    <text evidence="1">Metabolic intermediate biosynthesis; 1-deoxy-D-xylulose 5-phosphate biosynthesis; 1-deoxy-D-xylulose 5-phosphate from D-glyceraldehyde 3-phosphate and pyruvate: step 1/1.</text>
</comment>
<comment type="subunit">
    <text evidence="1">Homodimer.</text>
</comment>
<comment type="similarity">
    <text evidence="1">Belongs to the transketolase family. DXPS subfamily.</text>
</comment>
<gene>
    <name evidence="1" type="primary">dxs</name>
</gene>
<keyword id="KW-0414">Isoprene biosynthesis</keyword>
<keyword id="KW-0460">Magnesium</keyword>
<keyword id="KW-0479">Metal-binding</keyword>
<keyword id="KW-0784">Thiamine biosynthesis</keyword>
<keyword id="KW-0786">Thiamine pyrophosphate</keyword>
<keyword id="KW-0808">Transferase</keyword>
<name>DXS_RHOCA</name>
<accession>P26242</accession>
<feature type="chain" id="PRO_0000189149" description="1-deoxy-D-xylulose-5-phosphate synthase">
    <location>
        <begin position="1"/>
        <end position="641"/>
    </location>
</feature>
<feature type="binding site" evidence="1">
    <location>
        <position position="80"/>
    </location>
    <ligand>
        <name>thiamine diphosphate</name>
        <dbReference type="ChEBI" id="CHEBI:58937"/>
    </ligand>
</feature>
<feature type="binding site" evidence="1">
    <location>
        <begin position="121"/>
        <end position="123"/>
    </location>
    <ligand>
        <name>thiamine diphosphate</name>
        <dbReference type="ChEBI" id="CHEBI:58937"/>
    </ligand>
</feature>
<feature type="binding site" evidence="1">
    <location>
        <position position="152"/>
    </location>
    <ligand>
        <name>Mg(2+)</name>
        <dbReference type="ChEBI" id="CHEBI:18420"/>
    </ligand>
</feature>
<feature type="binding site" evidence="1">
    <location>
        <begin position="153"/>
        <end position="154"/>
    </location>
    <ligand>
        <name>thiamine diphosphate</name>
        <dbReference type="ChEBI" id="CHEBI:58937"/>
    </ligand>
</feature>
<feature type="binding site" evidence="1">
    <location>
        <position position="181"/>
    </location>
    <ligand>
        <name>Mg(2+)</name>
        <dbReference type="ChEBI" id="CHEBI:18420"/>
    </ligand>
</feature>
<feature type="binding site" evidence="1">
    <location>
        <position position="181"/>
    </location>
    <ligand>
        <name>thiamine diphosphate</name>
        <dbReference type="ChEBI" id="CHEBI:58937"/>
    </ligand>
</feature>
<feature type="binding site" evidence="1">
    <location>
        <position position="290"/>
    </location>
    <ligand>
        <name>thiamine diphosphate</name>
        <dbReference type="ChEBI" id="CHEBI:58937"/>
    </ligand>
</feature>
<feature type="binding site" evidence="1">
    <location>
        <position position="372"/>
    </location>
    <ligand>
        <name>thiamine diphosphate</name>
        <dbReference type="ChEBI" id="CHEBI:58937"/>
    </ligand>
</feature>
<dbReference type="EC" id="2.2.1.7" evidence="1"/>
<dbReference type="EMBL" id="K01183">
    <property type="status" value="NOT_ANNOTATED_CDS"/>
    <property type="molecule type" value="Genomic_DNA"/>
</dbReference>
<dbReference type="EMBL" id="Z11165">
    <property type="protein sequence ID" value="CAA77557.1"/>
    <property type="molecule type" value="Genomic_DNA"/>
</dbReference>
<dbReference type="PIR" id="G28771">
    <property type="entry name" value="G28771"/>
</dbReference>
<dbReference type="RefSeq" id="WP_013066440.1">
    <property type="nucleotide sequence ID" value="NZ_VIBE01000010.1"/>
</dbReference>
<dbReference type="SMR" id="P26242"/>
<dbReference type="GeneID" id="31489642"/>
<dbReference type="OMA" id="IAPDKMH"/>
<dbReference type="UniPathway" id="UPA00064">
    <property type="reaction ID" value="UER00091"/>
</dbReference>
<dbReference type="GO" id="GO:0008661">
    <property type="term" value="F:1-deoxy-D-xylulose-5-phosphate synthase activity"/>
    <property type="evidence" value="ECO:0007669"/>
    <property type="project" value="UniProtKB-UniRule"/>
</dbReference>
<dbReference type="GO" id="GO:0000287">
    <property type="term" value="F:magnesium ion binding"/>
    <property type="evidence" value="ECO:0007669"/>
    <property type="project" value="UniProtKB-UniRule"/>
</dbReference>
<dbReference type="GO" id="GO:0030976">
    <property type="term" value="F:thiamine pyrophosphate binding"/>
    <property type="evidence" value="ECO:0007669"/>
    <property type="project" value="UniProtKB-UniRule"/>
</dbReference>
<dbReference type="GO" id="GO:0052865">
    <property type="term" value="P:1-deoxy-D-xylulose 5-phosphate biosynthetic process"/>
    <property type="evidence" value="ECO:0007669"/>
    <property type="project" value="UniProtKB-UniPathway"/>
</dbReference>
<dbReference type="GO" id="GO:0019682">
    <property type="term" value="P:glyceraldehyde-3-phosphate metabolic process"/>
    <property type="evidence" value="ECO:0007669"/>
    <property type="project" value="UniProtKB-ARBA"/>
</dbReference>
<dbReference type="GO" id="GO:0016114">
    <property type="term" value="P:terpenoid biosynthetic process"/>
    <property type="evidence" value="ECO:0007669"/>
    <property type="project" value="UniProtKB-UniRule"/>
</dbReference>
<dbReference type="GO" id="GO:0009228">
    <property type="term" value="P:thiamine biosynthetic process"/>
    <property type="evidence" value="ECO:0007669"/>
    <property type="project" value="UniProtKB-UniRule"/>
</dbReference>
<dbReference type="CDD" id="cd02007">
    <property type="entry name" value="TPP_DXS"/>
    <property type="match status" value="1"/>
</dbReference>
<dbReference type="CDD" id="cd07033">
    <property type="entry name" value="TPP_PYR_DXS_TK_like"/>
    <property type="match status" value="1"/>
</dbReference>
<dbReference type="FunFam" id="3.40.50.920:FF:000002">
    <property type="entry name" value="1-deoxy-D-xylulose-5-phosphate synthase"/>
    <property type="match status" value="1"/>
</dbReference>
<dbReference type="FunFam" id="3.40.50.970:FF:000005">
    <property type="entry name" value="1-deoxy-D-xylulose-5-phosphate synthase"/>
    <property type="match status" value="1"/>
</dbReference>
<dbReference type="Gene3D" id="3.40.50.920">
    <property type="match status" value="1"/>
</dbReference>
<dbReference type="Gene3D" id="3.40.50.970">
    <property type="match status" value="2"/>
</dbReference>
<dbReference type="HAMAP" id="MF_00315">
    <property type="entry name" value="DXP_synth"/>
    <property type="match status" value="1"/>
</dbReference>
<dbReference type="InterPro" id="IPR005477">
    <property type="entry name" value="Dxylulose-5-P_synthase"/>
</dbReference>
<dbReference type="InterPro" id="IPR029061">
    <property type="entry name" value="THDP-binding"/>
</dbReference>
<dbReference type="InterPro" id="IPR000399">
    <property type="entry name" value="TPP-bd_CS"/>
</dbReference>
<dbReference type="InterPro" id="IPR009014">
    <property type="entry name" value="Transketo_C/PFOR_II"/>
</dbReference>
<dbReference type="InterPro" id="IPR005475">
    <property type="entry name" value="Transketolase-like_Pyr-bd"/>
</dbReference>
<dbReference type="InterPro" id="IPR020826">
    <property type="entry name" value="Transketolase_BS"/>
</dbReference>
<dbReference type="InterPro" id="IPR033248">
    <property type="entry name" value="Transketolase_C"/>
</dbReference>
<dbReference type="InterPro" id="IPR049557">
    <property type="entry name" value="Transketolase_CS"/>
</dbReference>
<dbReference type="NCBIfam" id="TIGR00204">
    <property type="entry name" value="dxs"/>
    <property type="match status" value="1"/>
</dbReference>
<dbReference type="NCBIfam" id="NF003933">
    <property type="entry name" value="PRK05444.2-2"/>
    <property type="match status" value="1"/>
</dbReference>
<dbReference type="PANTHER" id="PTHR43322">
    <property type="entry name" value="1-D-DEOXYXYLULOSE 5-PHOSPHATE SYNTHASE-RELATED"/>
    <property type="match status" value="1"/>
</dbReference>
<dbReference type="PANTHER" id="PTHR43322:SF5">
    <property type="entry name" value="1-DEOXY-D-XYLULOSE-5-PHOSPHATE SYNTHASE, CHLOROPLASTIC"/>
    <property type="match status" value="1"/>
</dbReference>
<dbReference type="Pfam" id="PF13292">
    <property type="entry name" value="DXP_synthase_N"/>
    <property type="match status" value="1"/>
</dbReference>
<dbReference type="Pfam" id="PF02779">
    <property type="entry name" value="Transket_pyr"/>
    <property type="match status" value="1"/>
</dbReference>
<dbReference type="Pfam" id="PF02780">
    <property type="entry name" value="Transketolase_C"/>
    <property type="match status" value="1"/>
</dbReference>
<dbReference type="SMART" id="SM00861">
    <property type="entry name" value="Transket_pyr"/>
    <property type="match status" value="1"/>
</dbReference>
<dbReference type="SUPFAM" id="SSF52518">
    <property type="entry name" value="Thiamin diphosphate-binding fold (THDP-binding)"/>
    <property type="match status" value="2"/>
</dbReference>
<dbReference type="SUPFAM" id="SSF52922">
    <property type="entry name" value="TK C-terminal domain-like"/>
    <property type="match status" value="1"/>
</dbReference>
<dbReference type="PROSITE" id="PS00801">
    <property type="entry name" value="TRANSKETOLASE_1"/>
    <property type="match status" value="1"/>
</dbReference>
<dbReference type="PROSITE" id="PS00802">
    <property type="entry name" value="TRANSKETOLASE_2"/>
    <property type="match status" value="1"/>
</dbReference>
<organism>
    <name type="scientific">Rhodobacter capsulatus</name>
    <name type="common">Rhodopseudomonas capsulata</name>
    <dbReference type="NCBI Taxonomy" id="1061"/>
    <lineage>
        <taxon>Bacteria</taxon>
        <taxon>Pseudomonadati</taxon>
        <taxon>Pseudomonadota</taxon>
        <taxon>Alphaproteobacteria</taxon>
        <taxon>Rhodobacterales</taxon>
        <taxon>Rhodobacter group</taxon>
        <taxon>Rhodobacter</taxon>
    </lineage>
</organism>
<evidence type="ECO:0000255" key="1">
    <source>
        <dbReference type="HAMAP-Rule" id="MF_00315"/>
    </source>
</evidence>
<protein>
    <recommendedName>
        <fullName evidence="1">1-deoxy-D-xylulose-5-phosphate synthase</fullName>
        <ecNumber evidence="1">2.2.1.7</ecNumber>
    </recommendedName>
    <alternativeName>
        <fullName evidence="1">1-deoxyxylulose-5-phosphate synthase</fullName>
        <shortName evidence="1">DXP synthase</shortName>
        <shortName evidence="1">DXPS</shortName>
    </alternativeName>
</protein>
<reference key="1">
    <citation type="journal article" date="1984" name="Cell">
        <title>Nucleotide and deduced polypeptide sequences of the photosynthetic reaction-center, B870 antenna, and flanking polypeptides from R. capsulata.</title>
        <authorList>
            <person name="Youvan D.C."/>
            <person name="Bylina E.J."/>
            <person name="Alberti M."/>
            <person name="Begusch H."/>
            <person name="Hearst J.E."/>
        </authorList>
    </citation>
    <scope>NUCLEOTIDE SEQUENCE [GENOMIC DNA]</scope>
</reference>